<sequence>MKLQTTYPSNNYPIFVEHGAIDHISTYIDQFDQSFILIDEHVNQYFADKFDDILSYENVHKVIIPAGEKTKTFEQYQETLEYILSHHVTRNTAIIAVGGGATGDFAGFVAATLLRGVHFIQVPTTILAHDSSVGGKVGINSKQGKNLIGAFYRPTAVIYDLDFLKTLPFEQILSGYAEVYKHALLNGESTTQEIEQHFKDREILQSLNGMDKYIAKGIETKLDIVVADEKEQGVRKFLNLGHTFGHAVEYNHKIAHGHAVMIGIIYQFIVANILFNSNHDIQHYINYLTKLGYPLETITDIDFETIYQYMLSDKKNDKQGVQMVLIKHFGDIVVQHIDQTTLQHACEQLKTYFK</sequence>
<protein>
    <recommendedName>
        <fullName evidence="1">3-dehydroquinate synthase</fullName>
        <shortName evidence="1">DHQS</shortName>
        <ecNumber evidence="1">4.2.3.4</ecNumber>
    </recommendedName>
</protein>
<dbReference type="EC" id="4.2.3.4" evidence="1"/>
<dbReference type="EMBL" id="CP000736">
    <property type="protein sequence ID" value="ABR52402.1"/>
    <property type="molecule type" value="Genomic_DNA"/>
</dbReference>
<dbReference type="SMR" id="A6U1T4"/>
<dbReference type="KEGG" id="sah:SaurJH1_1553"/>
<dbReference type="HOGENOM" id="CLU_001201_0_1_9"/>
<dbReference type="UniPathway" id="UPA00053">
    <property type="reaction ID" value="UER00085"/>
</dbReference>
<dbReference type="GO" id="GO:0005737">
    <property type="term" value="C:cytoplasm"/>
    <property type="evidence" value="ECO:0007669"/>
    <property type="project" value="UniProtKB-SubCell"/>
</dbReference>
<dbReference type="GO" id="GO:0003856">
    <property type="term" value="F:3-dehydroquinate synthase activity"/>
    <property type="evidence" value="ECO:0007669"/>
    <property type="project" value="UniProtKB-UniRule"/>
</dbReference>
<dbReference type="GO" id="GO:0046872">
    <property type="term" value="F:metal ion binding"/>
    <property type="evidence" value="ECO:0007669"/>
    <property type="project" value="UniProtKB-KW"/>
</dbReference>
<dbReference type="GO" id="GO:0000166">
    <property type="term" value="F:nucleotide binding"/>
    <property type="evidence" value="ECO:0007669"/>
    <property type="project" value="UniProtKB-KW"/>
</dbReference>
<dbReference type="GO" id="GO:0008652">
    <property type="term" value="P:amino acid biosynthetic process"/>
    <property type="evidence" value="ECO:0007669"/>
    <property type="project" value="UniProtKB-KW"/>
</dbReference>
<dbReference type="GO" id="GO:0009073">
    <property type="term" value="P:aromatic amino acid family biosynthetic process"/>
    <property type="evidence" value="ECO:0007669"/>
    <property type="project" value="UniProtKB-KW"/>
</dbReference>
<dbReference type="GO" id="GO:0009423">
    <property type="term" value="P:chorismate biosynthetic process"/>
    <property type="evidence" value="ECO:0007669"/>
    <property type="project" value="UniProtKB-UniRule"/>
</dbReference>
<dbReference type="FunFam" id="3.40.50.1970:FF:000019">
    <property type="entry name" value="3-dehydroquinate synthase"/>
    <property type="match status" value="1"/>
</dbReference>
<dbReference type="Gene3D" id="3.40.50.1970">
    <property type="match status" value="1"/>
</dbReference>
<dbReference type="Gene3D" id="1.20.1090.10">
    <property type="entry name" value="Dehydroquinate synthase-like - alpha domain"/>
    <property type="match status" value="1"/>
</dbReference>
<dbReference type="HAMAP" id="MF_00110">
    <property type="entry name" value="DHQ_synthase"/>
    <property type="match status" value="1"/>
</dbReference>
<dbReference type="InterPro" id="IPR050071">
    <property type="entry name" value="Dehydroquinate_synthase"/>
</dbReference>
<dbReference type="InterPro" id="IPR016037">
    <property type="entry name" value="DHQ_synth_AroB"/>
</dbReference>
<dbReference type="InterPro" id="IPR030963">
    <property type="entry name" value="DHQ_synth_fam"/>
</dbReference>
<dbReference type="InterPro" id="IPR030960">
    <property type="entry name" value="DHQS/DOIS_N"/>
</dbReference>
<dbReference type="InterPro" id="IPR056179">
    <property type="entry name" value="DHQS_C"/>
</dbReference>
<dbReference type="NCBIfam" id="TIGR01357">
    <property type="entry name" value="aroB"/>
    <property type="match status" value="1"/>
</dbReference>
<dbReference type="PANTHER" id="PTHR43622">
    <property type="entry name" value="3-DEHYDROQUINATE SYNTHASE"/>
    <property type="match status" value="1"/>
</dbReference>
<dbReference type="PANTHER" id="PTHR43622:SF7">
    <property type="entry name" value="3-DEHYDROQUINATE SYNTHASE, CHLOROPLASTIC"/>
    <property type="match status" value="1"/>
</dbReference>
<dbReference type="Pfam" id="PF01761">
    <property type="entry name" value="DHQ_synthase"/>
    <property type="match status" value="1"/>
</dbReference>
<dbReference type="Pfam" id="PF24621">
    <property type="entry name" value="DHQS_C"/>
    <property type="match status" value="1"/>
</dbReference>
<dbReference type="PIRSF" id="PIRSF001455">
    <property type="entry name" value="DHQ_synth"/>
    <property type="match status" value="1"/>
</dbReference>
<dbReference type="SUPFAM" id="SSF56796">
    <property type="entry name" value="Dehydroquinate synthase-like"/>
    <property type="match status" value="1"/>
</dbReference>
<accession>A6U1T4</accession>
<comment type="function">
    <text evidence="1">Catalyzes the conversion of 3-deoxy-D-arabino-heptulosonate 7-phosphate (DAHP) to dehydroquinate (DHQ).</text>
</comment>
<comment type="catalytic activity">
    <reaction evidence="1">
        <text>7-phospho-2-dehydro-3-deoxy-D-arabino-heptonate = 3-dehydroquinate + phosphate</text>
        <dbReference type="Rhea" id="RHEA:21968"/>
        <dbReference type="ChEBI" id="CHEBI:32364"/>
        <dbReference type="ChEBI" id="CHEBI:43474"/>
        <dbReference type="ChEBI" id="CHEBI:58394"/>
        <dbReference type="EC" id="4.2.3.4"/>
    </reaction>
</comment>
<comment type="cofactor">
    <cofactor evidence="1">
        <name>Co(2+)</name>
        <dbReference type="ChEBI" id="CHEBI:48828"/>
    </cofactor>
    <cofactor evidence="1">
        <name>Zn(2+)</name>
        <dbReference type="ChEBI" id="CHEBI:29105"/>
    </cofactor>
    <text evidence="1">Binds 1 divalent metal cation per subunit. Can use either Co(2+) or Zn(2+).</text>
</comment>
<comment type="cofactor">
    <cofactor evidence="1">
        <name>NAD(+)</name>
        <dbReference type="ChEBI" id="CHEBI:57540"/>
    </cofactor>
</comment>
<comment type="pathway">
    <text evidence="1">Metabolic intermediate biosynthesis; chorismate biosynthesis; chorismate from D-erythrose 4-phosphate and phosphoenolpyruvate: step 2/7.</text>
</comment>
<comment type="subcellular location">
    <subcellularLocation>
        <location evidence="1">Cytoplasm</location>
    </subcellularLocation>
</comment>
<comment type="similarity">
    <text evidence="1">Belongs to the sugar phosphate cyclases superfamily. Dehydroquinate synthase family.</text>
</comment>
<name>AROB_STAA2</name>
<proteinExistence type="inferred from homology"/>
<keyword id="KW-0028">Amino-acid biosynthesis</keyword>
<keyword id="KW-0057">Aromatic amino acid biosynthesis</keyword>
<keyword id="KW-0170">Cobalt</keyword>
<keyword id="KW-0963">Cytoplasm</keyword>
<keyword id="KW-0456">Lyase</keyword>
<keyword id="KW-0479">Metal-binding</keyword>
<keyword id="KW-0520">NAD</keyword>
<keyword id="KW-0547">Nucleotide-binding</keyword>
<keyword id="KW-0862">Zinc</keyword>
<reference key="1">
    <citation type="submission" date="2007-06" db="EMBL/GenBank/DDBJ databases">
        <title>Complete sequence of chromosome of Staphylococcus aureus subsp. aureus JH1.</title>
        <authorList>
            <consortium name="US DOE Joint Genome Institute"/>
            <person name="Copeland A."/>
            <person name="Lucas S."/>
            <person name="Lapidus A."/>
            <person name="Barry K."/>
            <person name="Detter J.C."/>
            <person name="Glavina del Rio T."/>
            <person name="Hammon N."/>
            <person name="Israni S."/>
            <person name="Dalin E."/>
            <person name="Tice H."/>
            <person name="Pitluck S."/>
            <person name="Chain P."/>
            <person name="Malfatti S."/>
            <person name="Shin M."/>
            <person name="Vergez L."/>
            <person name="Schmutz J."/>
            <person name="Larimer F."/>
            <person name="Land M."/>
            <person name="Hauser L."/>
            <person name="Kyrpides N."/>
            <person name="Ivanova N."/>
            <person name="Tomasz A."/>
            <person name="Richardson P."/>
        </authorList>
    </citation>
    <scope>NUCLEOTIDE SEQUENCE [LARGE SCALE GENOMIC DNA]</scope>
    <source>
        <strain>JH1</strain>
    </source>
</reference>
<organism>
    <name type="scientific">Staphylococcus aureus (strain JH1)</name>
    <dbReference type="NCBI Taxonomy" id="359787"/>
    <lineage>
        <taxon>Bacteria</taxon>
        <taxon>Bacillati</taxon>
        <taxon>Bacillota</taxon>
        <taxon>Bacilli</taxon>
        <taxon>Bacillales</taxon>
        <taxon>Staphylococcaceae</taxon>
        <taxon>Staphylococcus</taxon>
    </lineage>
</organism>
<feature type="chain" id="PRO_1000094627" description="3-dehydroquinate synthase">
    <location>
        <begin position="1"/>
        <end position="354"/>
    </location>
</feature>
<feature type="binding site" evidence="1">
    <location>
        <begin position="100"/>
        <end position="104"/>
    </location>
    <ligand>
        <name>NAD(+)</name>
        <dbReference type="ChEBI" id="CHEBI:57540"/>
    </ligand>
</feature>
<feature type="binding site" evidence="1">
    <location>
        <begin position="124"/>
        <end position="125"/>
    </location>
    <ligand>
        <name>NAD(+)</name>
        <dbReference type="ChEBI" id="CHEBI:57540"/>
    </ligand>
</feature>
<feature type="binding site" evidence="1">
    <location>
        <position position="136"/>
    </location>
    <ligand>
        <name>NAD(+)</name>
        <dbReference type="ChEBI" id="CHEBI:57540"/>
    </ligand>
</feature>
<feature type="binding site" evidence="1">
    <location>
        <position position="145"/>
    </location>
    <ligand>
        <name>NAD(+)</name>
        <dbReference type="ChEBI" id="CHEBI:57540"/>
    </ligand>
</feature>
<feature type="binding site" evidence="1">
    <location>
        <begin position="163"/>
        <end position="166"/>
    </location>
    <ligand>
        <name>NAD(+)</name>
        <dbReference type="ChEBI" id="CHEBI:57540"/>
    </ligand>
</feature>
<feature type="binding site" evidence="1">
    <location>
        <position position="178"/>
    </location>
    <ligand>
        <name>Zn(2+)</name>
        <dbReference type="ChEBI" id="CHEBI:29105"/>
    </ligand>
</feature>
<feature type="binding site" evidence="1">
    <location>
        <position position="242"/>
    </location>
    <ligand>
        <name>Zn(2+)</name>
        <dbReference type="ChEBI" id="CHEBI:29105"/>
    </ligand>
</feature>
<feature type="binding site" evidence="1">
    <location>
        <position position="256"/>
    </location>
    <ligand>
        <name>Zn(2+)</name>
        <dbReference type="ChEBI" id="CHEBI:29105"/>
    </ligand>
</feature>
<gene>
    <name evidence="1" type="primary">aroB</name>
    <name type="ordered locus">SaurJH1_1553</name>
</gene>
<evidence type="ECO:0000255" key="1">
    <source>
        <dbReference type="HAMAP-Rule" id="MF_00110"/>
    </source>
</evidence>